<name>RACE_DICDI</name>
<keyword id="KW-1003">Cell membrane</keyword>
<keyword id="KW-0342">GTP-binding</keyword>
<keyword id="KW-0449">Lipoprotein</keyword>
<keyword id="KW-0472">Membrane</keyword>
<keyword id="KW-0488">Methylation</keyword>
<keyword id="KW-0547">Nucleotide-binding</keyword>
<keyword id="KW-0636">Prenylation</keyword>
<keyword id="KW-1185">Reference proteome</keyword>
<evidence type="ECO:0000250" key="1"/>
<evidence type="ECO:0000255" key="2"/>
<evidence type="ECO:0000256" key="3">
    <source>
        <dbReference type="SAM" id="MobiDB-lite"/>
    </source>
</evidence>
<evidence type="ECO:0000269" key="4">
    <source>
    </source>
</evidence>
<evidence type="ECO:0000305" key="5"/>
<protein>
    <recommendedName>
        <fullName>Rho-related protein racE</fullName>
    </recommendedName>
</protein>
<organism>
    <name type="scientific">Dictyostelium discoideum</name>
    <name type="common">Social amoeba</name>
    <dbReference type="NCBI Taxonomy" id="44689"/>
    <lineage>
        <taxon>Eukaryota</taxon>
        <taxon>Amoebozoa</taxon>
        <taxon>Evosea</taxon>
        <taxon>Eumycetozoa</taxon>
        <taxon>Dictyostelia</taxon>
        <taxon>Dictyosteliales</taxon>
        <taxon>Dictyosteliaceae</taxon>
        <taxon>Dictyostelium</taxon>
    </lineage>
</organism>
<comment type="function">
    <text>Specifically required for cytokinesis.</text>
</comment>
<comment type="subunit">
    <text evidence="4">Interacts with rgaA.</text>
</comment>
<comment type="interaction">
    <interactant intactId="EBI-2118748">
        <id>Q23862</id>
    </interactant>
    <interactant intactId="EBI-2889579">
        <id>O76187</id>
        <label>darA</label>
    </interactant>
    <organismsDiffer>false</organismsDiffer>
    <experiments>2</experiments>
</comment>
<comment type="subcellular location">
    <subcellularLocation>
        <location evidence="5">Cell membrane</location>
        <topology evidence="5">Lipid-anchor</topology>
        <orientation evidence="5">Cytoplasmic side</orientation>
    </subcellularLocation>
</comment>
<comment type="similarity">
    <text evidence="5">Belongs to the small GTPase superfamily. Rho family.</text>
</comment>
<sequence>MSEDQGSGATRVKLVVVGDGAVGKTCLLICYAQNDFPVDYVPTVFENYTATRKRGNEDIKVHLWDTAGQEEYDRLRPLSYPGADVVLLCFSTISQSSYEAIRDKWAPEVNHYIPDVPSILVGTKIDLREQQHPDPNSGKFEPITADMGISMQKQIKAKKYLEVSAKTRQGLEEVFSAAIEIVLESRGMDKKSQDGSSSASGVPSGDKPTKGKAGKKKSGCIIL</sequence>
<proteinExistence type="evidence at protein level"/>
<gene>
    <name type="primary">racE</name>
    <name type="ORF">DDB_G0280975</name>
</gene>
<dbReference type="EMBL" id="U41222">
    <property type="protein sequence ID" value="AAB16752.1"/>
    <property type="molecule type" value="Genomic_DNA"/>
</dbReference>
<dbReference type="EMBL" id="AF310890">
    <property type="protein sequence ID" value="AAG45124.1"/>
    <property type="molecule type" value="Genomic_DNA"/>
</dbReference>
<dbReference type="EMBL" id="AAFI02000040">
    <property type="protein sequence ID" value="EAL66784.1"/>
    <property type="molecule type" value="Genomic_DNA"/>
</dbReference>
<dbReference type="RefSeq" id="XP_640935.1">
    <property type="nucleotide sequence ID" value="XM_635843.1"/>
</dbReference>
<dbReference type="SMR" id="Q23862"/>
<dbReference type="FunCoup" id="Q23862">
    <property type="interactions" value="57"/>
</dbReference>
<dbReference type="IntAct" id="Q23862">
    <property type="interactions" value="2"/>
</dbReference>
<dbReference type="STRING" id="44689.Q23862"/>
<dbReference type="PaxDb" id="44689-DDB0214825"/>
<dbReference type="EnsemblProtists" id="EAL66784">
    <property type="protein sequence ID" value="EAL66784"/>
    <property type="gene ID" value="DDB_G0280975"/>
</dbReference>
<dbReference type="GeneID" id="8623000"/>
<dbReference type="KEGG" id="ddi:DDB_G0280975"/>
<dbReference type="dictyBase" id="DDB_G0280975">
    <property type="gene designation" value="racE"/>
</dbReference>
<dbReference type="VEuPathDB" id="AmoebaDB:DDB_G0280975"/>
<dbReference type="eggNOG" id="KOG0393">
    <property type="taxonomic scope" value="Eukaryota"/>
</dbReference>
<dbReference type="HOGENOM" id="CLU_041217_21_1_1"/>
<dbReference type="InParanoid" id="Q23862"/>
<dbReference type="OMA" id="EVNHYIP"/>
<dbReference type="PhylomeDB" id="Q23862"/>
<dbReference type="Reactome" id="R-DDI-6798695">
    <property type="pathway name" value="Neutrophil degranulation"/>
</dbReference>
<dbReference type="Reactome" id="R-DDI-9013404">
    <property type="pathway name" value="RAC2 GTPase cycle"/>
</dbReference>
<dbReference type="Reactome" id="R-DDI-9013407">
    <property type="pathway name" value="RHOH GTPase cycle"/>
</dbReference>
<dbReference type="Reactome" id="R-DDI-9013408">
    <property type="pathway name" value="RHOG GTPase cycle"/>
</dbReference>
<dbReference type="Reactome" id="R-DDI-9013418">
    <property type="pathway name" value="RHOBTB2 GTPase cycle"/>
</dbReference>
<dbReference type="Reactome" id="R-DDI-9013422">
    <property type="pathway name" value="RHOBTB1 GTPase cycle"/>
</dbReference>
<dbReference type="PRO" id="PR:Q23862"/>
<dbReference type="Proteomes" id="UP000002195">
    <property type="component" value="Chromosome 3"/>
</dbReference>
<dbReference type="GO" id="GO:0005938">
    <property type="term" value="C:cell cortex"/>
    <property type="evidence" value="ECO:0000314"/>
    <property type="project" value="dictyBase"/>
</dbReference>
<dbReference type="GO" id="GO:0042995">
    <property type="term" value="C:cell projection"/>
    <property type="evidence" value="ECO:0000318"/>
    <property type="project" value="GO_Central"/>
</dbReference>
<dbReference type="GO" id="GO:0031254">
    <property type="term" value="C:cell trailing edge"/>
    <property type="evidence" value="ECO:0000314"/>
    <property type="project" value="dictyBase"/>
</dbReference>
<dbReference type="GO" id="GO:0032154">
    <property type="term" value="C:cleavage furrow"/>
    <property type="evidence" value="ECO:0000314"/>
    <property type="project" value="dictyBase"/>
</dbReference>
<dbReference type="GO" id="GO:0031410">
    <property type="term" value="C:cytoplasmic vesicle"/>
    <property type="evidence" value="ECO:0000318"/>
    <property type="project" value="GO_Central"/>
</dbReference>
<dbReference type="GO" id="GO:0005856">
    <property type="term" value="C:cytoskeleton"/>
    <property type="evidence" value="ECO:0000318"/>
    <property type="project" value="GO_Central"/>
</dbReference>
<dbReference type="GO" id="GO:0005811">
    <property type="term" value="C:lipid droplet"/>
    <property type="evidence" value="ECO:0007005"/>
    <property type="project" value="dictyBase"/>
</dbReference>
<dbReference type="GO" id="GO:0005886">
    <property type="term" value="C:plasma membrane"/>
    <property type="evidence" value="ECO:0000314"/>
    <property type="project" value="dictyBase"/>
</dbReference>
<dbReference type="GO" id="GO:0031932">
    <property type="term" value="C:TORC2 complex"/>
    <property type="evidence" value="ECO:0000314"/>
    <property type="project" value="dictyBase"/>
</dbReference>
<dbReference type="GO" id="GO:0005525">
    <property type="term" value="F:GTP binding"/>
    <property type="evidence" value="ECO:0000318"/>
    <property type="project" value="GO_Central"/>
</dbReference>
<dbReference type="GO" id="GO:0003924">
    <property type="term" value="F:GTPase activity"/>
    <property type="evidence" value="ECO:0000318"/>
    <property type="project" value="GO_Central"/>
</dbReference>
<dbReference type="GO" id="GO:0019901">
    <property type="term" value="F:protein kinase binding"/>
    <property type="evidence" value="ECO:0000318"/>
    <property type="project" value="GO_Central"/>
</dbReference>
<dbReference type="GO" id="GO:0035591">
    <property type="term" value="F:signaling adaptor activity"/>
    <property type="evidence" value="ECO:0000314"/>
    <property type="project" value="dictyBase"/>
</dbReference>
<dbReference type="GO" id="GO:0007015">
    <property type="term" value="P:actin filament organization"/>
    <property type="evidence" value="ECO:0000318"/>
    <property type="project" value="GO_Central"/>
</dbReference>
<dbReference type="GO" id="GO:0019954">
    <property type="term" value="P:asexual reproduction"/>
    <property type="evidence" value="ECO:0000315"/>
    <property type="project" value="dictyBase"/>
</dbReference>
<dbReference type="GO" id="GO:0051702">
    <property type="term" value="P:biological process involved in interaction with symbiont"/>
    <property type="evidence" value="ECO:0000315"/>
    <property type="project" value="dictyBase"/>
</dbReference>
<dbReference type="GO" id="GO:0043327">
    <property type="term" value="P:chemotaxis to cAMP"/>
    <property type="evidence" value="ECO:0000315"/>
    <property type="project" value="dictyBase"/>
</dbReference>
<dbReference type="GO" id="GO:0030865">
    <property type="term" value="P:cortical cytoskeleton organization"/>
    <property type="evidence" value="ECO:0000316"/>
    <property type="project" value="dictyBase"/>
</dbReference>
<dbReference type="GO" id="GO:0007163">
    <property type="term" value="P:establishment or maintenance of cell polarity"/>
    <property type="evidence" value="ECO:0000318"/>
    <property type="project" value="GO_Central"/>
</dbReference>
<dbReference type="GO" id="GO:0000281">
    <property type="term" value="P:mitotic cytokinesis"/>
    <property type="evidence" value="ECO:0000315"/>
    <property type="project" value="dictyBase"/>
</dbReference>
<dbReference type="GO" id="GO:0110094">
    <property type="term" value="P:polyphosphate-mediated signaling"/>
    <property type="evidence" value="ECO:0000315"/>
    <property type="project" value="dictyBase"/>
</dbReference>
<dbReference type="GO" id="GO:0032467">
    <property type="term" value="P:positive regulation of cytokinesis"/>
    <property type="evidence" value="ECO:0000316"/>
    <property type="project" value="dictyBase"/>
</dbReference>
<dbReference type="GO" id="GO:0051897">
    <property type="term" value="P:positive regulation of phosphatidylinositol 3-kinase/protein kinase B signal transduction"/>
    <property type="evidence" value="ECO:0000315"/>
    <property type="project" value="dictyBase"/>
</dbReference>
<dbReference type="GO" id="GO:1904515">
    <property type="term" value="P:positive regulation of TORC2 signaling"/>
    <property type="evidence" value="ECO:0000314"/>
    <property type="project" value="dictyBase"/>
</dbReference>
<dbReference type="GO" id="GO:0051291">
    <property type="term" value="P:protein heterooligomerization"/>
    <property type="evidence" value="ECO:0000314"/>
    <property type="project" value="dictyBase"/>
</dbReference>
<dbReference type="GO" id="GO:0051260">
    <property type="term" value="P:protein homooligomerization"/>
    <property type="evidence" value="ECO:0000314"/>
    <property type="project" value="dictyBase"/>
</dbReference>
<dbReference type="GO" id="GO:0072697">
    <property type="term" value="P:protein localization to cell cortex"/>
    <property type="evidence" value="ECO:0000315"/>
    <property type="project" value="dictyBase"/>
</dbReference>
<dbReference type="GO" id="GO:0016601">
    <property type="term" value="P:Rac protein signal transduction"/>
    <property type="evidence" value="ECO:0000315"/>
    <property type="project" value="dictyBase"/>
</dbReference>
<dbReference type="GO" id="GO:0032956">
    <property type="term" value="P:regulation of actin cytoskeleton organization"/>
    <property type="evidence" value="ECO:0000318"/>
    <property type="project" value="GO_Central"/>
</dbReference>
<dbReference type="GO" id="GO:0008360">
    <property type="term" value="P:regulation of cell shape"/>
    <property type="evidence" value="ECO:0000318"/>
    <property type="project" value="GO_Central"/>
</dbReference>
<dbReference type="GO" id="GO:0061118">
    <property type="term" value="P:regulation of positive chemotaxis to cAMP"/>
    <property type="evidence" value="ECO:0000315"/>
    <property type="project" value="dictyBase"/>
</dbReference>
<dbReference type="GO" id="GO:0019953">
    <property type="term" value="P:sexual reproduction"/>
    <property type="evidence" value="ECO:0000270"/>
    <property type="project" value="dictyBase"/>
</dbReference>
<dbReference type="GO" id="GO:0007165">
    <property type="term" value="P:signal transduction"/>
    <property type="evidence" value="ECO:0000318"/>
    <property type="project" value="GO_Central"/>
</dbReference>
<dbReference type="GO" id="GO:0030587">
    <property type="term" value="P:sorocarp development"/>
    <property type="evidence" value="ECO:0000315"/>
    <property type="project" value="dictyBase"/>
</dbReference>
<dbReference type="CDD" id="cd00157">
    <property type="entry name" value="Rho"/>
    <property type="match status" value="1"/>
</dbReference>
<dbReference type="FunFam" id="3.40.50.300:FF:000983">
    <property type="entry name" value="Rho family GTPase"/>
    <property type="match status" value="1"/>
</dbReference>
<dbReference type="Gene3D" id="3.40.50.300">
    <property type="entry name" value="P-loop containing nucleotide triphosphate hydrolases"/>
    <property type="match status" value="1"/>
</dbReference>
<dbReference type="InterPro" id="IPR027417">
    <property type="entry name" value="P-loop_NTPase"/>
</dbReference>
<dbReference type="InterPro" id="IPR005225">
    <property type="entry name" value="Small_GTP-bd"/>
</dbReference>
<dbReference type="InterPro" id="IPR001806">
    <property type="entry name" value="Small_GTPase"/>
</dbReference>
<dbReference type="InterPro" id="IPR003578">
    <property type="entry name" value="Small_GTPase_Rho"/>
</dbReference>
<dbReference type="NCBIfam" id="TIGR00231">
    <property type="entry name" value="small_GTP"/>
    <property type="match status" value="1"/>
</dbReference>
<dbReference type="PANTHER" id="PTHR24072">
    <property type="entry name" value="RHO FAMILY GTPASE"/>
    <property type="match status" value="1"/>
</dbReference>
<dbReference type="Pfam" id="PF00071">
    <property type="entry name" value="Ras"/>
    <property type="match status" value="1"/>
</dbReference>
<dbReference type="PRINTS" id="PR00449">
    <property type="entry name" value="RASTRNSFRMNG"/>
</dbReference>
<dbReference type="SMART" id="SM00175">
    <property type="entry name" value="RAB"/>
    <property type="match status" value="1"/>
</dbReference>
<dbReference type="SMART" id="SM00176">
    <property type="entry name" value="RAN"/>
    <property type="match status" value="1"/>
</dbReference>
<dbReference type="SMART" id="SM00173">
    <property type="entry name" value="RAS"/>
    <property type="match status" value="1"/>
</dbReference>
<dbReference type="SMART" id="SM00174">
    <property type="entry name" value="RHO"/>
    <property type="match status" value="1"/>
</dbReference>
<dbReference type="SUPFAM" id="SSF52540">
    <property type="entry name" value="P-loop containing nucleoside triphosphate hydrolases"/>
    <property type="match status" value="1"/>
</dbReference>
<dbReference type="PROSITE" id="PS51420">
    <property type="entry name" value="RHO"/>
    <property type="match status" value="1"/>
</dbReference>
<feature type="chain" id="PRO_0000198902" description="Rho-related protein racE">
    <location>
        <begin position="1"/>
        <end position="220"/>
    </location>
</feature>
<feature type="propeptide" id="PRO_0000281251" description="Removed in mature form" evidence="1">
    <location>
        <begin position="221"/>
        <end position="223"/>
    </location>
</feature>
<feature type="region of interest" description="Disordered" evidence="3">
    <location>
        <begin position="187"/>
        <end position="223"/>
    </location>
</feature>
<feature type="short sequence motif" description="Effector region" evidence="2">
    <location>
        <begin position="40"/>
        <end position="48"/>
    </location>
</feature>
<feature type="compositionally biased region" description="Basic residues" evidence="3">
    <location>
        <begin position="210"/>
        <end position="223"/>
    </location>
</feature>
<feature type="binding site" evidence="1">
    <location>
        <begin position="18"/>
        <end position="25"/>
    </location>
    <ligand>
        <name>GTP</name>
        <dbReference type="ChEBI" id="CHEBI:37565"/>
    </ligand>
</feature>
<feature type="binding site" evidence="1">
    <location>
        <begin position="65"/>
        <end position="69"/>
    </location>
    <ligand>
        <name>GTP</name>
        <dbReference type="ChEBI" id="CHEBI:37565"/>
    </ligand>
</feature>
<feature type="binding site" evidence="1">
    <location>
        <begin position="123"/>
        <end position="126"/>
    </location>
    <ligand>
        <name>GTP</name>
        <dbReference type="ChEBI" id="CHEBI:37565"/>
    </ligand>
</feature>
<feature type="modified residue" description="Cysteine methyl ester" evidence="1">
    <location>
        <position position="220"/>
    </location>
</feature>
<feature type="lipid moiety-binding region" description="S-geranylgeranyl cysteine" evidence="1">
    <location>
        <position position="220"/>
    </location>
</feature>
<accession>Q23862</accession>
<accession>Q54U41</accession>
<reference key="1">
    <citation type="journal article" date="1996" name="J. Cell Biol.">
        <title>A novel member of the rho family of small GTP-binding proteins is specifically required for cytokinesis.</title>
        <authorList>
            <person name="Larochelle D.A."/>
            <person name="Vithalani K.K."/>
            <person name="de Lozanne A."/>
        </authorList>
    </citation>
    <scope>NUCLEOTIDE SEQUENCE [GENOMIC DNA]</scope>
    <source>
        <strain>AX3 / DH1</strain>
    </source>
</reference>
<reference key="2">
    <citation type="journal article" date="2001" name="Nucleic Acids Res.">
        <title>The Dictyostelium discoideum family of Rho-related proteins.</title>
        <authorList>
            <person name="Rivero F."/>
            <person name="Dislich H."/>
            <person name="Gloeckner G."/>
            <person name="Noegel A.A."/>
        </authorList>
    </citation>
    <scope>NUCLEOTIDE SEQUENCE [GENOMIC DNA]</scope>
    <source>
        <strain>AX4</strain>
    </source>
</reference>
<reference key="3">
    <citation type="journal article" date="2005" name="Nature">
        <title>The genome of the social amoeba Dictyostelium discoideum.</title>
        <authorList>
            <person name="Eichinger L."/>
            <person name="Pachebat J.A."/>
            <person name="Gloeckner G."/>
            <person name="Rajandream M.A."/>
            <person name="Sucgang R."/>
            <person name="Berriman M."/>
            <person name="Song J."/>
            <person name="Olsen R."/>
            <person name="Szafranski K."/>
            <person name="Xu Q."/>
            <person name="Tunggal B."/>
            <person name="Kummerfeld S."/>
            <person name="Madera M."/>
            <person name="Konfortov B.A."/>
            <person name="Rivero F."/>
            <person name="Bankier A.T."/>
            <person name="Lehmann R."/>
            <person name="Hamlin N."/>
            <person name="Davies R."/>
            <person name="Gaudet P."/>
            <person name="Fey P."/>
            <person name="Pilcher K."/>
            <person name="Chen G."/>
            <person name="Saunders D."/>
            <person name="Sodergren E.J."/>
            <person name="Davis P."/>
            <person name="Kerhornou A."/>
            <person name="Nie X."/>
            <person name="Hall N."/>
            <person name="Anjard C."/>
            <person name="Hemphill L."/>
            <person name="Bason N."/>
            <person name="Farbrother P."/>
            <person name="Desany B."/>
            <person name="Just E."/>
            <person name="Morio T."/>
            <person name="Rost R."/>
            <person name="Churcher C.M."/>
            <person name="Cooper J."/>
            <person name="Haydock S."/>
            <person name="van Driessche N."/>
            <person name="Cronin A."/>
            <person name="Goodhead I."/>
            <person name="Muzny D.M."/>
            <person name="Mourier T."/>
            <person name="Pain A."/>
            <person name="Lu M."/>
            <person name="Harper D."/>
            <person name="Lindsay R."/>
            <person name="Hauser H."/>
            <person name="James K.D."/>
            <person name="Quiles M."/>
            <person name="Madan Babu M."/>
            <person name="Saito T."/>
            <person name="Buchrieser C."/>
            <person name="Wardroper A."/>
            <person name="Felder M."/>
            <person name="Thangavelu M."/>
            <person name="Johnson D."/>
            <person name="Knights A."/>
            <person name="Loulseged H."/>
            <person name="Mungall K.L."/>
            <person name="Oliver K."/>
            <person name="Price C."/>
            <person name="Quail M.A."/>
            <person name="Urushihara H."/>
            <person name="Hernandez J."/>
            <person name="Rabbinowitsch E."/>
            <person name="Steffen D."/>
            <person name="Sanders M."/>
            <person name="Ma J."/>
            <person name="Kohara Y."/>
            <person name="Sharp S."/>
            <person name="Simmonds M.N."/>
            <person name="Spiegler S."/>
            <person name="Tivey A."/>
            <person name="Sugano S."/>
            <person name="White B."/>
            <person name="Walker D."/>
            <person name="Woodward J.R."/>
            <person name="Winckler T."/>
            <person name="Tanaka Y."/>
            <person name="Shaulsky G."/>
            <person name="Schleicher M."/>
            <person name="Weinstock G.M."/>
            <person name="Rosenthal A."/>
            <person name="Cox E.C."/>
            <person name="Chisholm R.L."/>
            <person name="Gibbs R.A."/>
            <person name="Loomis W.F."/>
            <person name="Platzer M."/>
            <person name="Kay R.R."/>
            <person name="Williams J.G."/>
            <person name="Dear P.H."/>
            <person name="Noegel A.A."/>
            <person name="Barrell B.G."/>
            <person name="Kuspa A."/>
        </authorList>
    </citation>
    <scope>NUCLEOTIDE SEQUENCE [LARGE SCALE GENOMIC DNA]</scope>
    <source>
        <strain>AX4</strain>
    </source>
</reference>
<reference key="4">
    <citation type="journal article" date="1998" name="J. Cell Sci.">
        <title>The IQGAP-related protein DGAP1 interacts with Rac and is involved in the modulation of the F-actin cytoskeleton and control of cell motility.</title>
        <authorList>
            <person name="Faix J."/>
            <person name="Clougherty C."/>
            <person name="Konzok A."/>
            <person name="Mintert U."/>
            <person name="Murphy J."/>
            <person name="Albrecht R."/>
            <person name="Muhlbauer B."/>
            <person name="Kuhlmann J."/>
        </authorList>
    </citation>
    <scope>INTERACTION WITH RGAA</scope>
</reference>